<comment type="function">
    <text evidence="2">Isobutyryl-CoA dehydrogenase which catalyzes the conversion of 2-methylpropanoyl-CoA to (2E)-2-methylpropenoyl-CoA in the valine catabolic pathway. To a lesser extent, also able to catalyze the oxidation of (2S)-2-methylbutanoyl-CoA.</text>
</comment>
<comment type="catalytic activity">
    <reaction evidence="2">
        <text>2-methylpropanoyl-CoA + oxidized [electron-transfer flavoprotein] + H(+) = 2-methylpropenoyl-CoA + reduced [electron-transfer flavoprotein]</text>
        <dbReference type="Rhea" id="RHEA:44180"/>
        <dbReference type="Rhea" id="RHEA-COMP:10685"/>
        <dbReference type="Rhea" id="RHEA-COMP:10686"/>
        <dbReference type="ChEBI" id="CHEBI:15378"/>
        <dbReference type="ChEBI" id="CHEBI:57338"/>
        <dbReference type="ChEBI" id="CHEBI:57692"/>
        <dbReference type="ChEBI" id="CHEBI:58307"/>
        <dbReference type="ChEBI" id="CHEBI:62500"/>
        <dbReference type="EC" id="1.3.8.5"/>
    </reaction>
    <physiologicalReaction direction="left-to-right" evidence="2">
        <dbReference type="Rhea" id="RHEA:44181"/>
    </physiologicalReaction>
</comment>
<comment type="catalytic activity">
    <reaction evidence="2">
        <text>(2S)-2-methylbutanoyl-CoA + oxidized [electron-transfer flavoprotein] + H(+) = (2E)-2-methylbut-2-enoyl-CoA + reduced [electron-transfer flavoprotein]</text>
        <dbReference type="Rhea" id="RHEA:48256"/>
        <dbReference type="Rhea" id="RHEA-COMP:10685"/>
        <dbReference type="Rhea" id="RHEA-COMP:10686"/>
        <dbReference type="ChEBI" id="CHEBI:15378"/>
        <dbReference type="ChEBI" id="CHEBI:57337"/>
        <dbReference type="ChEBI" id="CHEBI:57692"/>
        <dbReference type="ChEBI" id="CHEBI:58307"/>
        <dbReference type="ChEBI" id="CHEBI:88166"/>
    </reaction>
    <physiologicalReaction direction="left-to-right" evidence="2">
        <dbReference type="Rhea" id="RHEA:48257"/>
    </physiologicalReaction>
</comment>
<comment type="catalytic activity">
    <reaction evidence="2">
        <text>propanoyl-CoA + oxidized [electron-transfer flavoprotein] + H(+) = acryloyl-CoA + reduced [electron-transfer flavoprotein]</text>
        <dbReference type="Rhea" id="RHEA:31287"/>
        <dbReference type="Rhea" id="RHEA-COMP:10685"/>
        <dbReference type="Rhea" id="RHEA-COMP:10686"/>
        <dbReference type="ChEBI" id="CHEBI:15378"/>
        <dbReference type="ChEBI" id="CHEBI:57367"/>
        <dbReference type="ChEBI" id="CHEBI:57392"/>
        <dbReference type="ChEBI" id="CHEBI:57692"/>
        <dbReference type="ChEBI" id="CHEBI:58307"/>
    </reaction>
    <physiologicalReaction direction="left-to-right" evidence="2">
        <dbReference type="Rhea" id="RHEA:31288"/>
    </physiologicalReaction>
</comment>
<comment type="cofactor">
    <cofactor evidence="2">
        <name>FAD</name>
        <dbReference type="ChEBI" id="CHEBI:57692"/>
    </cofactor>
</comment>
<comment type="pathway">
    <text evidence="2">Amino-acid degradation; L-valine degradation.</text>
</comment>
<comment type="subunit">
    <text evidence="2">Homotetramer, formed by a dimer of dimers.</text>
</comment>
<comment type="subcellular location">
    <subcellularLocation>
        <location evidence="2">Mitochondrion</location>
    </subcellularLocation>
</comment>
<comment type="similarity">
    <text evidence="4">Belongs to the acyl-CoA dehydrogenase family.</text>
</comment>
<reference key="1">
    <citation type="journal article" date="2007" name="J. Genet. Genomics">
        <title>Structure of the bovine ACAD8 gene and the association of its polymorphism with the production traits.</title>
        <authorList>
            <person name="Li H."/>
            <person name="Xu S."/>
            <person name="Gao X."/>
            <person name="Ren H."/>
        </authorList>
    </citation>
    <scope>NUCLEOTIDE SEQUENCE [GENOMIC DNA / MRNA]</scope>
</reference>
<reference key="2">
    <citation type="submission" date="2006-10" db="EMBL/GenBank/DDBJ databases">
        <authorList>
            <consortium name="NIH - Mammalian Gene Collection (MGC) project"/>
        </authorList>
    </citation>
    <scope>NUCLEOTIDE SEQUENCE [LARGE SCALE MRNA]</scope>
    <source>
        <strain>Hereford</strain>
        <tissue>Fetal muscle</tissue>
    </source>
</reference>
<sequence>MMLRGGCQRVGARLRGLRRGPRGPADGARRGVVSCIDPSMGLSEEQKEFQKVAFNFAAREMAPHMAEWDQKELFPVDTMRKAAQLGFGGVYVQTDVGGAGLSRLDTSIIFEALATGCTSTTAYMSIHNMCVWIIDRFGSEEQRHRLCPPLCTMEKFASYCLTEPGSGSDAASLMTSAVRQHDHYILNGSKAFISGGGEADIYVVMCRTGGPGPRGISCVVVEKGTPGLSFGKKEKKVGWNSQPTQAVIFEDCAVPVANRIGDEGQGFLIAMKGLNGGRINVASCSLGAAHASIVLARDYLKVRKQFGEPLANSQYLQFQLADMAARLVASRLMIRTAATALQEEREDAIVLCSMAKLFATDECFAICNQALQMHGGYGYLKDYAVQQYVRDSRVHQILEGSNEVMRMLISRSLLQE</sequence>
<dbReference type="EC" id="1.3.8.5" evidence="2"/>
<dbReference type="EMBL" id="DQ435444">
    <property type="protein sequence ID" value="ABD97096.1"/>
    <property type="molecule type" value="mRNA"/>
</dbReference>
<dbReference type="EMBL" id="DQ435445">
    <property type="protein sequence ID" value="ABD97097.1"/>
    <property type="molecule type" value="Genomic_DNA"/>
</dbReference>
<dbReference type="EMBL" id="BC126750">
    <property type="protein sequence ID" value="AAI26751.1"/>
    <property type="molecule type" value="mRNA"/>
</dbReference>
<dbReference type="RefSeq" id="NP_001069019.1">
    <property type="nucleotide sequence ID" value="NM_001075551.1"/>
</dbReference>
<dbReference type="SMR" id="Q0NXR6"/>
<dbReference type="FunCoup" id="Q0NXR6">
    <property type="interactions" value="1003"/>
</dbReference>
<dbReference type="STRING" id="9913.ENSBTAP00000017188"/>
<dbReference type="PaxDb" id="9913-ENSBTAP00000017188"/>
<dbReference type="PeptideAtlas" id="Q0NXR6"/>
<dbReference type="Ensembl" id="ENSBTAT00000017188.6">
    <property type="protein sequence ID" value="ENSBTAP00000017188.6"/>
    <property type="gene ID" value="ENSBTAG00000012937.7"/>
</dbReference>
<dbReference type="GeneID" id="512070"/>
<dbReference type="KEGG" id="bta:512070"/>
<dbReference type="CTD" id="27034"/>
<dbReference type="VEuPathDB" id="HostDB:ENSBTAG00000012937"/>
<dbReference type="VGNC" id="VGNC:25522">
    <property type="gene designation" value="ACAD8"/>
</dbReference>
<dbReference type="eggNOG" id="KOG0140">
    <property type="taxonomic scope" value="Eukaryota"/>
</dbReference>
<dbReference type="GeneTree" id="ENSGT00940000157590"/>
<dbReference type="InParanoid" id="Q0NXR6"/>
<dbReference type="OMA" id="NMATWML"/>
<dbReference type="OrthoDB" id="10254877at2759"/>
<dbReference type="Reactome" id="R-BTA-70895">
    <property type="pathway name" value="Branched-chain amino acid catabolism"/>
</dbReference>
<dbReference type="Reactome" id="R-BTA-9837999">
    <property type="pathway name" value="Mitochondrial protein degradation"/>
</dbReference>
<dbReference type="UniPathway" id="UPA00362"/>
<dbReference type="Proteomes" id="UP000009136">
    <property type="component" value="Chromosome 15"/>
</dbReference>
<dbReference type="Bgee" id="ENSBTAG00000012937">
    <property type="expression patterns" value="Expressed in caput epididymis and 104 other cell types or tissues"/>
</dbReference>
<dbReference type="GO" id="GO:0005739">
    <property type="term" value="C:mitochondrion"/>
    <property type="evidence" value="ECO:0007669"/>
    <property type="project" value="UniProtKB-SubCell"/>
</dbReference>
<dbReference type="GO" id="GO:0050660">
    <property type="term" value="F:flavin adenine dinucleotide binding"/>
    <property type="evidence" value="ECO:0007669"/>
    <property type="project" value="InterPro"/>
</dbReference>
<dbReference type="GO" id="GO:0003853">
    <property type="term" value="F:short-chain 2-methyl fatty acyl-CoA dehydrogenase activity"/>
    <property type="evidence" value="ECO:0007669"/>
    <property type="project" value="RHEA"/>
</dbReference>
<dbReference type="GO" id="GO:0006629">
    <property type="term" value="P:lipid metabolic process"/>
    <property type="evidence" value="ECO:0007669"/>
    <property type="project" value="InterPro"/>
</dbReference>
<dbReference type="GO" id="GO:0006574">
    <property type="term" value="P:valine catabolic process"/>
    <property type="evidence" value="ECO:0007669"/>
    <property type="project" value="UniProtKB-UniPathway"/>
</dbReference>
<dbReference type="CDD" id="cd01162">
    <property type="entry name" value="IBD"/>
    <property type="match status" value="1"/>
</dbReference>
<dbReference type="FunFam" id="1.20.140.10:FF:000001">
    <property type="entry name" value="Acyl-CoA dehydrogenase"/>
    <property type="match status" value="1"/>
</dbReference>
<dbReference type="FunFam" id="2.40.110.10:FF:000001">
    <property type="entry name" value="Acyl-CoA dehydrogenase, mitochondrial"/>
    <property type="match status" value="1"/>
</dbReference>
<dbReference type="Gene3D" id="1.10.540.10">
    <property type="entry name" value="Acyl-CoA dehydrogenase/oxidase, N-terminal domain"/>
    <property type="match status" value="1"/>
</dbReference>
<dbReference type="Gene3D" id="2.40.110.10">
    <property type="entry name" value="Butyryl-CoA Dehydrogenase, subunit A, domain 2"/>
    <property type="match status" value="1"/>
</dbReference>
<dbReference type="Gene3D" id="1.20.140.10">
    <property type="entry name" value="Butyryl-CoA Dehydrogenase, subunit A, domain 3"/>
    <property type="match status" value="1"/>
</dbReference>
<dbReference type="InterPro" id="IPR006089">
    <property type="entry name" value="Acyl-CoA_DH_CS"/>
</dbReference>
<dbReference type="InterPro" id="IPR006091">
    <property type="entry name" value="Acyl-CoA_Oxase/DH_mid-dom"/>
</dbReference>
<dbReference type="InterPro" id="IPR046373">
    <property type="entry name" value="Acyl-CoA_Oxase/DH_mid-dom_sf"/>
</dbReference>
<dbReference type="InterPro" id="IPR036250">
    <property type="entry name" value="AcylCo_DH-like_C"/>
</dbReference>
<dbReference type="InterPro" id="IPR009075">
    <property type="entry name" value="AcylCo_DH/oxidase_C"/>
</dbReference>
<dbReference type="InterPro" id="IPR013786">
    <property type="entry name" value="AcylCoA_DH/ox_N"/>
</dbReference>
<dbReference type="InterPro" id="IPR037069">
    <property type="entry name" value="AcylCoA_DH/ox_N_sf"/>
</dbReference>
<dbReference type="InterPro" id="IPR009100">
    <property type="entry name" value="AcylCoA_DH/oxidase_NM_dom_sf"/>
</dbReference>
<dbReference type="InterPro" id="IPR034178">
    <property type="entry name" value="IBD"/>
</dbReference>
<dbReference type="InterPro" id="IPR052547">
    <property type="entry name" value="Mito_Isobutyryl-CoADH"/>
</dbReference>
<dbReference type="PANTHER" id="PTHR43831">
    <property type="entry name" value="ISOBUTYRYL-COA DEHYDROGENASE"/>
    <property type="match status" value="1"/>
</dbReference>
<dbReference type="PANTHER" id="PTHR43831:SF1">
    <property type="entry name" value="ISOBUTYRYL-COA DEHYDROGENASE, MITOCHONDRIAL"/>
    <property type="match status" value="1"/>
</dbReference>
<dbReference type="Pfam" id="PF00441">
    <property type="entry name" value="Acyl-CoA_dh_1"/>
    <property type="match status" value="1"/>
</dbReference>
<dbReference type="Pfam" id="PF02770">
    <property type="entry name" value="Acyl-CoA_dh_M"/>
    <property type="match status" value="1"/>
</dbReference>
<dbReference type="Pfam" id="PF02771">
    <property type="entry name" value="Acyl-CoA_dh_N"/>
    <property type="match status" value="1"/>
</dbReference>
<dbReference type="PIRSF" id="PIRSF016578">
    <property type="entry name" value="HsaA"/>
    <property type="match status" value="1"/>
</dbReference>
<dbReference type="SUPFAM" id="SSF47203">
    <property type="entry name" value="Acyl-CoA dehydrogenase C-terminal domain-like"/>
    <property type="match status" value="1"/>
</dbReference>
<dbReference type="SUPFAM" id="SSF56645">
    <property type="entry name" value="Acyl-CoA dehydrogenase NM domain-like"/>
    <property type="match status" value="1"/>
</dbReference>
<dbReference type="PROSITE" id="PS00072">
    <property type="entry name" value="ACYL_COA_DH_1"/>
    <property type="match status" value="1"/>
</dbReference>
<organism>
    <name type="scientific">Bos taurus</name>
    <name type="common">Bovine</name>
    <dbReference type="NCBI Taxonomy" id="9913"/>
    <lineage>
        <taxon>Eukaryota</taxon>
        <taxon>Metazoa</taxon>
        <taxon>Chordata</taxon>
        <taxon>Craniata</taxon>
        <taxon>Vertebrata</taxon>
        <taxon>Euteleostomi</taxon>
        <taxon>Mammalia</taxon>
        <taxon>Eutheria</taxon>
        <taxon>Laurasiatheria</taxon>
        <taxon>Artiodactyla</taxon>
        <taxon>Ruminantia</taxon>
        <taxon>Pecora</taxon>
        <taxon>Bovidae</taxon>
        <taxon>Bovinae</taxon>
        <taxon>Bos</taxon>
    </lineage>
</organism>
<gene>
    <name type="primary">ACAD8</name>
</gene>
<proteinExistence type="evidence at transcript level"/>
<evidence type="ECO:0000250" key="1">
    <source>
        <dbReference type="UniProtKB" id="Q9D7B6"/>
    </source>
</evidence>
<evidence type="ECO:0000250" key="2">
    <source>
        <dbReference type="UniProtKB" id="Q9UKU7"/>
    </source>
</evidence>
<evidence type="ECO:0000255" key="3"/>
<evidence type="ECO:0000305" key="4"/>
<protein>
    <recommendedName>
        <fullName>Isobutyryl-CoA dehydrogenase, mitochondrial</fullName>
        <ecNumber evidence="2">1.3.8.5</ecNumber>
    </recommendedName>
    <alternativeName>
        <fullName evidence="2">Acyl-CoA dehydrogenase family member 8</fullName>
        <shortName evidence="2">ACAD-8</shortName>
    </alternativeName>
</protein>
<feature type="transit peptide" description="Mitochondrion" evidence="3">
    <location>
        <begin position="1"/>
        <end position="23"/>
    </location>
</feature>
<feature type="chain" id="PRO_0000253024" description="Isobutyryl-CoA dehydrogenase, mitochondrial">
    <location>
        <begin position="24"/>
        <end position="416"/>
    </location>
</feature>
<feature type="active site" description="Proton acceptor" evidence="2">
    <location>
        <position position="399"/>
    </location>
</feature>
<feature type="binding site" description="in other chain" evidence="2">
    <location>
        <begin position="159"/>
        <end position="168"/>
    </location>
    <ligand>
        <name>FAD</name>
        <dbReference type="ChEBI" id="CHEBI:57692"/>
        <note>ligand shared between dimeric partners</note>
    </ligand>
</feature>
<feature type="binding site" evidence="2">
    <location>
        <position position="168"/>
    </location>
    <ligand>
        <name>substrate</name>
    </ligand>
</feature>
<feature type="binding site" description="in other chain" evidence="2">
    <location>
        <begin position="192"/>
        <end position="194"/>
    </location>
    <ligand>
        <name>FAD</name>
        <dbReference type="ChEBI" id="CHEBI:57692"/>
        <note>ligand shared between dimeric partners</note>
    </ligand>
</feature>
<feature type="binding site" evidence="2">
    <location>
        <begin position="275"/>
        <end position="278"/>
    </location>
    <ligand>
        <name>substrate</name>
    </ligand>
</feature>
<feature type="binding site" evidence="2">
    <location>
        <position position="303"/>
    </location>
    <ligand>
        <name>FAD</name>
        <dbReference type="ChEBI" id="CHEBI:57692"/>
        <note>ligand shared between dimeric partners</note>
    </ligand>
</feature>
<feature type="binding site" evidence="2">
    <location>
        <begin position="313"/>
        <end position="314"/>
    </location>
    <ligand>
        <name>FAD</name>
        <dbReference type="ChEBI" id="CHEBI:57692"/>
        <note>ligand shared between dimeric partners</note>
    </ligand>
</feature>
<feature type="binding site" evidence="2">
    <location>
        <begin position="372"/>
        <end position="376"/>
    </location>
    <ligand>
        <name>FAD</name>
        <dbReference type="ChEBI" id="CHEBI:57692"/>
        <note>ligand shared between dimeric partners</note>
    </ligand>
</feature>
<feature type="binding site" description="in other chain" evidence="2">
    <location>
        <begin position="401"/>
        <end position="403"/>
    </location>
    <ligand>
        <name>FAD</name>
        <dbReference type="ChEBI" id="CHEBI:57692"/>
        <note>ligand shared between dimeric partners</note>
    </ligand>
</feature>
<feature type="binding site" evidence="2">
    <location>
        <position position="411"/>
    </location>
    <ligand>
        <name>substrate</name>
    </ligand>
</feature>
<feature type="modified residue" description="N6-acetyllysine; alternate" evidence="1">
    <location>
        <position position="51"/>
    </location>
</feature>
<feature type="modified residue" description="N6-succinyllysine; alternate" evidence="1">
    <location>
        <position position="51"/>
    </location>
</feature>
<feature type="modified residue" description="N6-acetyllysine" evidence="1">
    <location>
        <position position="232"/>
    </location>
</feature>
<feature type="modified residue" description="N6-succinyllysine" evidence="1">
    <location>
        <position position="272"/>
    </location>
</feature>
<accession>Q0NXR6</accession>
<accession>A1A4N5</accession>
<keyword id="KW-0007">Acetylation</keyword>
<keyword id="KW-0101">Branched-chain amino acid catabolism</keyword>
<keyword id="KW-0274">FAD</keyword>
<keyword id="KW-0285">Flavoprotein</keyword>
<keyword id="KW-0496">Mitochondrion</keyword>
<keyword id="KW-0560">Oxidoreductase</keyword>
<keyword id="KW-1185">Reference proteome</keyword>
<keyword id="KW-0809">Transit peptide</keyword>
<name>ACAD8_BOVIN</name>